<sequence>MPHLGPLRRRAWAALLGQLLRPPSTVCTRGCHSQVAKAVLTSEQLKSHQEKPNFVIKVPKGTRDLSPQQMVVREKILDKIISCFKRHGAKGLDTPAFELKEMLTEKYEDNFGLMYDLKDQGGELLSLRYDLTVPFARYLAMNKLKKMKRYQVGKVWRRESPAIAQGRYREFCQCDFDIAGEFDPMIPDAECLRIMCEILSGLQLGDFLIKVNDRRVVDGIFAVCGVPESKLRTICSSMDKLDKMSWEGVRHEMVAKKGLAPEVADRIGDFVQYHGGISLVEDLFKDPRLSQSQLALQGLGDLKLLFEYLRLFGIADKISLDLSLARGLDYYTGVIYEAVLLESPAQAGKETLSVGSVAAGGRYDNLVAQFDPKGHHVPCVGLSIGVERIFYLVEQKMKMSGEKVRTTETQVFVATPQKNFLQERLKIIAELWDAGIKAEMLYKNNPKLLTQLHYCEKADIPLMVIIGEQERNEGVIKLRSVASREEVTINRESLVAEIQKRLSES</sequence>
<reference key="1">
    <citation type="journal article" date="2004" name="Genome Res.">
        <title>The status, quality, and expansion of the NIH full-length cDNA project: the Mammalian Gene Collection (MGC).</title>
        <authorList>
            <consortium name="The MGC Project Team"/>
        </authorList>
    </citation>
    <scope>NUCLEOTIDE SEQUENCE [LARGE SCALE MRNA]</scope>
    <source>
        <strain>FVB/N</strain>
        <tissue>Mammary tumor</tissue>
    </source>
</reference>
<reference key="2">
    <citation type="journal article" date="2010" name="Cell">
        <title>A tissue-specific atlas of mouse protein phosphorylation and expression.</title>
        <authorList>
            <person name="Huttlin E.L."/>
            <person name="Jedrychowski M.P."/>
            <person name="Elias J.E."/>
            <person name="Goswami T."/>
            <person name="Rad R."/>
            <person name="Beausoleil S.A."/>
            <person name="Villen J."/>
            <person name="Haas W."/>
            <person name="Sowa M.E."/>
            <person name="Gygi S.P."/>
        </authorList>
    </citation>
    <scope>PHOSPHORYLATION [LARGE SCALE ANALYSIS] AT SER-66</scope>
    <scope>IDENTIFICATION BY MASS SPECTROMETRY [LARGE SCALE ANALYSIS]</scope>
    <source>
        <tissue>Brown adipose tissue</tissue>
        <tissue>Heart</tissue>
        <tissue>Kidney</tissue>
        <tissue>Spleen</tissue>
        <tissue>Testis</tissue>
    </source>
</reference>
<feature type="transit peptide" description="Mitochondrion" evidence="3">
    <location>
        <begin position="1"/>
        <end position="31"/>
    </location>
</feature>
<feature type="chain" id="PRO_0000254584" description="Histidine--tRNA ligase, mitochondrial">
    <location>
        <begin position="32"/>
        <end position="505"/>
    </location>
</feature>
<feature type="binding site" evidence="1">
    <location>
        <begin position="130"/>
        <end position="132"/>
    </location>
    <ligand>
        <name>L-histidine</name>
        <dbReference type="ChEBI" id="CHEBI:57595"/>
    </ligand>
</feature>
<feature type="binding site" evidence="1">
    <location>
        <position position="157"/>
    </location>
    <ligand>
        <name>L-histidine</name>
        <dbReference type="ChEBI" id="CHEBI:57595"/>
    </ligand>
</feature>
<feature type="binding site" evidence="1">
    <location>
        <position position="173"/>
    </location>
    <ligand>
        <name>L-histidine</name>
        <dbReference type="ChEBI" id="CHEBI:57595"/>
    </ligand>
</feature>
<feature type="binding site" evidence="1">
    <location>
        <position position="177"/>
    </location>
    <ligand>
        <name>L-histidine</name>
        <dbReference type="ChEBI" id="CHEBI:57595"/>
    </ligand>
</feature>
<feature type="binding site" evidence="1">
    <location>
        <position position="326"/>
    </location>
    <ligand>
        <name>L-histidine</name>
        <dbReference type="ChEBI" id="CHEBI:57595"/>
    </ligand>
</feature>
<feature type="binding site" evidence="1">
    <location>
        <begin position="330"/>
        <end position="331"/>
    </location>
    <ligand>
        <name>L-histidine</name>
        <dbReference type="ChEBI" id="CHEBI:57595"/>
    </ligand>
</feature>
<feature type="modified residue" description="Phosphoserine" evidence="5">
    <location>
        <position position="66"/>
    </location>
</feature>
<feature type="modified residue" description="N6-acetyllysine" evidence="2">
    <location>
        <position position="443"/>
    </location>
</feature>
<proteinExistence type="evidence at protein level"/>
<evidence type="ECO:0000250" key="1">
    <source>
        <dbReference type="UniProtKB" id="P12081"/>
    </source>
</evidence>
<evidence type="ECO:0000250" key="2">
    <source>
        <dbReference type="UniProtKB" id="P49590"/>
    </source>
</evidence>
<evidence type="ECO:0000255" key="3"/>
<evidence type="ECO:0000305" key="4"/>
<evidence type="ECO:0007744" key="5">
    <source>
    </source>
</evidence>
<accession>Q99KK9</accession>
<dbReference type="EC" id="6.1.1.21" evidence="2"/>
<dbReference type="EMBL" id="BC004596">
    <property type="protein sequence ID" value="AAH04596.1"/>
    <property type="molecule type" value="mRNA"/>
</dbReference>
<dbReference type="CCDS" id="CCDS29165.1"/>
<dbReference type="RefSeq" id="NP_542367.1">
    <property type="nucleotide sequence ID" value="NM_080636.2"/>
</dbReference>
<dbReference type="SMR" id="Q99KK9"/>
<dbReference type="BioGRID" id="214256">
    <property type="interactions" value="11"/>
</dbReference>
<dbReference type="FunCoup" id="Q99KK9">
    <property type="interactions" value="4162"/>
</dbReference>
<dbReference type="STRING" id="10090.ENSMUSP00000117231"/>
<dbReference type="GlyGen" id="Q99KK9">
    <property type="glycosylation" value="1 site, 1 O-linked glycan (1 site)"/>
</dbReference>
<dbReference type="iPTMnet" id="Q99KK9"/>
<dbReference type="PhosphoSitePlus" id="Q99KK9"/>
<dbReference type="SwissPalm" id="Q99KK9"/>
<dbReference type="jPOST" id="Q99KK9"/>
<dbReference type="PaxDb" id="10090-ENSMUSP00000117231"/>
<dbReference type="PeptideAtlas" id="Q99KK9"/>
<dbReference type="ProteomicsDB" id="254734"/>
<dbReference type="Pumba" id="Q99KK9"/>
<dbReference type="Antibodypedia" id="27080">
    <property type="antibodies" value="218 antibodies from 23 providers"/>
</dbReference>
<dbReference type="DNASU" id="70791"/>
<dbReference type="Ensembl" id="ENSMUST00000152954.8">
    <property type="protein sequence ID" value="ENSMUSP00000117231.2"/>
    <property type="gene ID" value="ENSMUSG00000019143.16"/>
</dbReference>
<dbReference type="GeneID" id="70791"/>
<dbReference type="KEGG" id="mmu:70791"/>
<dbReference type="UCSC" id="uc008eor.2">
    <property type="organism name" value="mouse"/>
</dbReference>
<dbReference type="AGR" id="MGI:1918041"/>
<dbReference type="CTD" id="23438"/>
<dbReference type="MGI" id="MGI:1918041">
    <property type="gene designation" value="Hars2"/>
</dbReference>
<dbReference type="VEuPathDB" id="HostDB:ENSMUSG00000019143"/>
<dbReference type="eggNOG" id="KOG1936">
    <property type="taxonomic scope" value="Eukaryota"/>
</dbReference>
<dbReference type="GeneTree" id="ENSGT00390000005922"/>
<dbReference type="HOGENOM" id="CLU_025113_4_2_1"/>
<dbReference type="InParanoid" id="Q99KK9"/>
<dbReference type="OMA" id="YQIQKVW"/>
<dbReference type="OrthoDB" id="1906957at2759"/>
<dbReference type="PhylomeDB" id="Q99KK9"/>
<dbReference type="TreeFam" id="TF300652"/>
<dbReference type="BioGRID-ORCS" id="70791">
    <property type="hits" value="22 hits in 63 CRISPR screens"/>
</dbReference>
<dbReference type="ChiTaRS" id="Hars2">
    <property type="organism name" value="mouse"/>
</dbReference>
<dbReference type="PRO" id="PR:Q99KK9"/>
<dbReference type="Proteomes" id="UP000000589">
    <property type="component" value="Chromosome 18"/>
</dbReference>
<dbReference type="RNAct" id="Q99KK9">
    <property type="molecule type" value="protein"/>
</dbReference>
<dbReference type="Bgee" id="ENSMUSG00000019143">
    <property type="expression patterns" value="Expressed in retinal neural layer and 261 other cell types or tissues"/>
</dbReference>
<dbReference type="ExpressionAtlas" id="Q99KK9">
    <property type="expression patterns" value="baseline and differential"/>
</dbReference>
<dbReference type="GO" id="GO:0005739">
    <property type="term" value="C:mitochondrion"/>
    <property type="evidence" value="ECO:0007005"/>
    <property type="project" value="MGI"/>
</dbReference>
<dbReference type="GO" id="GO:0005524">
    <property type="term" value="F:ATP binding"/>
    <property type="evidence" value="ECO:0007669"/>
    <property type="project" value="UniProtKB-KW"/>
</dbReference>
<dbReference type="GO" id="GO:0004821">
    <property type="term" value="F:histidine-tRNA ligase activity"/>
    <property type="evidence" value="ECO:0007669"/>
    <property type="project" value="UniProtKB-EC"/>
</dbReference>
<dbReference type="GO" id="GO:0042802">
    <property type="term" value="F:identical protein binding"/>
    <property type="evidence" value="ECO:0007669"/>
    <property type="project" value="Ensembl"/>
</dbReference>
<dbReference type="GO" id="GO:0006427">
    <property type="term" value="P:histidyl-tRNA aminoacylation"/>
    <property type="evidence" value="ECO:0007669"/>
    <property type="project" value="Ensembl"/>
</dbReference>
<dbReference type="CDD" id="cd00773">
    <property type="entry name" value="HisRS-like_core"/>
    <property type="match status" value="1"/>
</dbReference>
<dbReference type="CDD" id="cd00859">
    <property type="entry name" value="HisRS_anticodon"/>
    <property type="match status" value="1"/>
</dbReference>
<dbReference type="FunFam" id="3.40.50.800:FF:000008">
    <property type="entry name" value="histidine--tRNA ligase, cytoplasmic isoform X1"/>
    <property type="match status" value="1"/>
</dbReference>
<dbReference type="FunFam" id="3.30.930.10:FF:000021">
    <property type="entry name" value="Probable histidine--tRNA ligase, mitochondrial"/>
    <property type="match status" value="1"/>
</dbReference>
<dbReference type="Gene3D" id="3.40.50.800">
    <property type="entry name" value="Anticodon-binding domain"/>
    <property type="match status" value="1"/>
</dbReference>
<dbReference type="Gene3D" id="3.30.930.10">
    <property type="entry name" value="Bira Bifunctional Protein, Domain 2"/>
    <property type="match status" value="1"/>
</dbReference>
<dbReference type="InterPro" id="IPR006195">
    <property type="entry name" value="aa-tRNA-synth_II"/>
</dbReference>
<dbReference type="InterPro" id="IPR045864">
    <property type="entry name" value="aa-tRNA-synth_II/BPL/LPL"/>
</dbReference>
<dbReference type="InterPro" id="IPR004154">
    <property type="entry name" value="Anticodon-bd"/>
</dbReference>
<dbReference type="InterPro" id="IPR036621">
    <property type="entry name" value="Anticodon-bd_dom_sf"/>
</dbReference>
<dbReference type="InterPro" id="IPR015807">
    <property type="entry name" value="His-tRNA-ligase"/>
</dbReference>
<dbReference type="InterPro" id="IPR041715">
    <property type="entry name" value="HisRS-like_core"/>
</dbReference>
<dbReference type="InterPro" id="IPR004516">
    <property type="entry name" value="HisRS/HisZ"/>
</dbReference>
<dbReference type="InterPro" id="IPR033656">
    <property type="entry name" value="HisRS_anticodon"/>
</dbReference>
<dbReference type="NCBIfam" id="TIGR00442">
    <property type="entry name" value="hisS"/>
    <property type="match status" value="1"/>
</dbReference>
<dbReference type="PANTHER" id="PTHR11476:SF6">
    <property type="entry name" value="HISTIDINE--TRNA LIGASE, MITOCHONDRIAL"/>
    <property type="match status" value="1"/>
</dbReference>
<dbReference type="PANTHER" id="PTHR11476">
    <property type="entry name" value="HISTIDYL-TRNA SYNTHETASE"/>
    <property type="match status" value="1"/>
</dbReference>
<dbReference type="Pfam" id="PF03129">
    <property type="entry name" value="HGTP_anticodon"/>
    <property type="match status" value="1"/>
</dbReference>
<dbReference type="Pfam" id="PF13393">
    <property type="entry name" value="tRNA-synt_His"/>
    <property type="match status" value="1"/>
</dbReference>
<dbReference type="PIRSF" id="PIRSF001549">
    <property type="entry name" value="His-tRNA_synth"/>
    <property type="match status" value="1"/>
</dbReference>
<dbReference type="SUPFAM" id="SSF52954">
    <property type="entry name" value="Class II aaRS ABD-related"/>
    <property type="match status" value="1"/>
</dbReference>
<dbReference type="SUPFAM" id="SSF55681">
    <property type="entry name" value="Class II aaRS and biotin synthetases"/>
    <property type="match status" value="1"/>
</dbReference>
<dbReference type="PROSITE" id="PS50862">
    <property type="entry name" value="AA_TRNA_LIGASE_II"/>
    <property type="match status" value="1"/>
</dbReference>
<organism>
    <name type="scientific">Mus musculus</name>
    <name type="common">Mouse</name>
    <dbReference type="NCBI Taxonomy" id="10090"/>
    <lineage>
        <taxon>Eukaryota</taxon>
        <taxon>Metazoa</taxon>
        <taxon>Chordata</taxon>
        <taxon>Craniata</taxon>
        <taxon>Vertebrata</taxon>
        <taxon>Euteleostomi</taxon>
        <taxon>Mammalia</taxon>
        <taxon>Eutheria</taxon>
        <taxon>Euarchontoglires</taxon>
        <taxon>Glires</taxon>
        <taxon>Rodentia</taxon>
        <taxon>Myomorpha</taxon>
        <taxon>Muroidea</taxon>
        <taxon>Muridae</taxon>
        <taxon>Murinae</taxon>
        <taxon>Mus</taxon>
        <taxon>Mus</taxon>
    </lineage>
</organism>
<comment type="function">
    <text evidence="2">Mitochondrial aminoacyl-tRNA synthetase that catalyzes the ATP-dependent ligation of histidine to the 3'-end of its cognate tRNA, via the formation of an aminoacyl-adenylate intermediate (His-AMP).</text>
</comment>
<comment type="catalytic activity">
    <reaction evidence="2">
        <text>tRNA(His) + L-histidine + ATP = L-histidyl-tRNA(His) + AMP + diphosphate + H(+)</text>
        <dbReference type="Rhea" id="RHEA:17313"/>
        <dbReference type="Rhea" id="RHEA-COMP:9665"/>
        <dbReference type="Rhea" id="RHEA-COMP:9689"/>
        <dbReference type="ChEBI" id="CHEBI:15378"/>
        <dbReference type="ChEBI" id="CHEBI:30616"/>
        <dbReference type="ChEBI" id="CHEBI:33019"/>
        <dbReference type="ChEBI" id="CHEBI:57595"/>
        <dbReference type="ChEBI" id="CHEBI:78442"/>
        <dbReference type="ChEBI" id="CHEBI:78527"/>
        <dbReference type="ChEBI" id="CHEBI:456215"/>
        <dbReference type="EC" id="6.1.1.21"/>
    </reaction>
</comment>
<comment type="subunit">
    <text evidence="2">Homodimer.</text>
</comment>
<comment type="subcellular location">
    <subcellularLocation>
        <location evidence="2">Mitochondrion</location>
    </subcellularLocation>
</comment>
<comment type="similarity">
    <text evidence="4">Belongs to the class-II aminoacyl-tRNA synthetase family.</text>
</comment>
<protein>
    <recommendedName>
        <fullName>Histidine--tRNA ligase, mitochondrial</fullName>
        <ecNumber evidence="2">6.1.1.21</ecNumber>
    </recommendedName>
    <alternativeName>
        <fullName>Histidine--tRNA ligase-like</fullName>
    </alternativeName>
    <alternativeName>
        <fullName>Histidyl-tRNA synthetase</fullName>
        <shortName>HisRS</shortName>
    </alternativeName>
</protein>
<gene>
    <name type="primary">Hars2</name>
    <name type="synonym">Harsl</name>
</gene>
<name>SYHM_MOUSE</name>
<keyword id="KW-0007">Acetylation</keyword>
<keyword id="KW-0030">Aminoacyl-tRNA synthetase</keyword>
<keyword id="KW-0067">ATP-binding</keyword>
<keyword id="KW-0436">Ligase</keyword>
<keyword id="KW-0496">Mitochondrion</keyword>
<keyword id="KW-0547">Nucleotide-binding</keyword>
<keyword id="KW-0597">Phosphoprotein</keyword>
<keyword id="KW-0648">Protein biosynthesis</keyword>
<keyword id="KW-1185">Reference proteome</keyword>
<keyword id="KW-0809">Transit peptide</keyword>